<proteinExistence type="inferred from homology"/>
<sequence>MSKIIGIDLGTTNSCVAVLEGGEPKVIPNPEGNRTTPSVVAFKNGERQVGEVAKRQAITNPNTIISVKRHMGTDHKVEAEGKQYTPQEMSAIILQHLKGYAEEYLGEPVTKAVITVPAYFNDAERQATKDAGKIAGLEVERIINEPTAAALAYGLEKTDEDQTVLVYDLGGGTFDVSILELGDGVFEVRATAGDNRLGGDDFDQVIIDYLVAEFKKENGVDLSKDKMALQRLKDAAEKAKKDLSGVTSTQISLPFITAGEAGPLHLEVSLSRAKFDELSAGLVERTMAPVRQALKDAGLSASELDKVILVGGSTRIPAVQDAIKKETGQDPHKGVNPDEVVALGAAIQGGVLTGDVKDVVLLDVTPLSLGIETMGGVFTKLIERNTTIPTSKSQVFSTAADSQTAVDIHVLQGERPMSADNKTLGRFQLTDIPPAPRGVPQIEVSFDIDKNGIVNVRAKDLGTNKEQAITIKSSTGLSDDEIDRMVKEAEENADADKQRKEEVELRNEADQLVFTTEKTLKDLEGKVEEAEVTKANEAKDALKAAIEKNDLEEIKAKKDELQEIVQALTVKLYEQAQQAQQAGEQGAQNDDVVDAEFEEVNDDKK</sequence>
<keyword id="KW-0067">ATP-binding</keyword>
<keyword id="KW-0143">Chaperone</keyword>
<keyword id="KW-0547">Nucleotide-binding</keyword>
<keyword id="KW-0597">Phosphoprotein</keyword>
<keyword id="KW-0346">Stress response</keyword>
<comment type="function">
    <text evidence="1">Acts as a chaperone.</text>
</comment>
<comment type="induction">
    <text evidence="1">By stress conditions e.g. heat shock (By similarity).</text>
</comment>
<comment type="similarity">
    <text evidence="3">Belongs to the heat shock protein 70 family.</text>
</comment>
<evidence type="ECO:0000250" key="1"/>
<evidence type="ECO:0000256" key="2">
    <source>
        <dbReference type="SAM" id="MobiDB-lite"/>
    </source>
</evidence>
<evidence type="ECO:0000305" key="3"/>
<protein>
    <recommendedName>
        <fullName>Chaperone protein DnaK</fullName>
    </recommendedName>
    <alternativeName>
        <fullName>HSP70</fullName>
    </alternativeName>
    <alternativeName>
        <fullName>Heat shock 70 kDa protein</fullName>
    </alternativeName>
    <alternativeName>
        <fullName>Heat shock protein 70</fullName>
    </alternativeName>
</protein>
<accession>P05646</accession>
<name>DNAK_PRIMG</name>
<feature type="initiator methionine" description="Removed" evidence="1">
    <location>
        <position position="1"/>
    </location>
</feature>
<feature type="chain" id="PRO_0000078417" description="Chaperone protein DnaK">
    <location>
        <begin position="2"/>
        <end position="605"/>
    </location>
</feature>
<feature type="region of interest" description="Disordered" evidence="2">
    <location>
        <begin position="578"/>
        <end position="605"/>
    </location>
</feature>
<feature type="compositionally biased region" description="Low complexity" evidence="2">
    <location>
        <begin position="578"/>
        <end position="588"/>
    </location>
</feature>
<feature type="compositionally biased region" description="Acidic residues" evidence="2">
    <location>
        <begin position="591"/>
        <end position="605"/>
    </location>
</feature>
<feature type="modified residue" description="Phosphothreonine; by autocatalysis" evidence="1">
    <location>
        <position position="173"/>
    </location>
</feature>
<reference key="1">
    <citation type="journal article" date="1987" name="Nucleic Acids Res.">
        <title>Nucleotide sequence of a Bacillus megaterium gene homologous to the dnaK gene of Escherichia coli.</title>
        <authorList>
            <person name="Sussman M.D."/>
            <person name="Setlow P."/>
        </authorList>
    </citation>
    <scope>NUCLEOTIDE SEQUENCE [GENOMIC DNA]</scope>
</reference>
<dbReference type="EMBL" id="Y00154">
    <property type="protein sequence ID" value="CAA68348.1"/>
    <property type="molecule type" value="Genomic_DNA"/>
</dbReference>
<dbReference type="PIR" id="I39837">
    <property type="entry name" value="I39837"/>
</dbReference>
<dbReference type="RefSeq" id="WP_013059242.1">
    <property type="nucleotide sequence ID" value="NZ_WWFB01000002.1"/>
</dbReference>
<dbReference type="SMR" id="P05646"/>
<dbReference type="STRING" id="1348908.GCA_000480335_01814"/>
<dbReference type="GeneID" id="93645023"/>
<dbReference type="OMA" id="MGTDWKI"/>
<dbReference type="GO" id="GO:0005524">
    <property type="term" value="F:ATP binding"/>
    <property type="evidence" value="ECO:0007669"/>
    <property type="project" value="UniProtKB-UniRule"/>
</dbReference>
<dbReference type="GO" id="GO:0140662">
    <property type="term" value="F:ATP-dependent protein folding chaperone"/>
    <property type="evidence" value="ECO:0007669"/>
    <property type="project" value="InterPro"/>
</dbReference>
<dbReference type="GO" id="GO:0051082">
    <property type="term" value="F:unfolded protein binding"/>
    <property type="evidence" value="ECO:0007669"/>
    <property type="project" value="InterPro"/>
</dbReference>
<dbReference type="CDD" id="cd10234">
    <property type="entry name" value="ASKHA_NBD_HSP70_DnaK-like"/>
    <property type="match status" value="1"/>
</dbReference>
<dbReference type="FunFam" id="2.60.34.10:FF:000014">
    <property type="entry name" value="Chaperone protein DnaK HSP70"/>
    <property type="match status" value="1"/>
</dbReference>
<dbReference type="FunFam" id="1.20.1270.10:FF:000004">
    <property type="entry name" value="Molecular chaperone DnaK"/>
    <property type="match status" value="1"/>
</dbReference>
<dbReference type="FunFam" id="3.30.420.40:FF:000071">
    <property type="entry name" value="Molecular chaperone DnaK"/>
    <property type="match status" value="1"/>
</dbReference>
<dbReference type="FunFam" id="3.90.640.10:FF:000003">
    <property type="entry name" value="Molecular chaperone DnaK"/>
    <property type="match status" value="1"/>
</dbReference>
<dbReference type="Gene3D" id="1.20.1270.10">
    <property type="match status" value="1"/>
</dbReference>
<dbReference type="Gene3D" id="3.30.420.40">
    <property type="match status" value="2"/>
</dbReference>
<dbReference type="Gene3D" id="3.90.640.10">
    <property type="entry name" value="Actin, Chain A, domain 4"/>
    <property type="match status" value="1"/>
</dbReference>
<dbReference type="Gene3D" id="2.60.34.10">
    <property type="entry name" value="Substrate Binding Domain Of DNAk, Chain A, domain 1"/>
    <property type="match status" value="1"/>
</dbReference>
<dbReference type="HAMAP" id="MF_00332">
    <property type="entry name" value="DnaK"/>
    <property type="match status" value="1"/>
</dbReference>
<dbReference type="InterPro" id="IPR043129">
    <property type="entry name" value="ATPase_NBD"/>
</dbReference>
<dbReference type="InterPro" id="IPR012725">
    <property type="entry name" value="Chaperone_DnaK"/>
</dbReference>
<dbReference type="InterPro" id="IPR018181">
    <property type="entry name" value="Heat_shock_70_CS"/>
</dbReference>
<dbReference type="InterPro" id="IPR029048">
    <property type="entry name" value="HSP70_C_sf"/>
</dbReference>
<dbReference type="InterPro" id="IPR029047">
    <property type="entry name" value="HSP70_peptide-bd_sf"/>
</dbReference>
<dbReference type="InterPro" id="IPR013126">
    <property type="entry name" value="Hsp_70_fam"/>
</dbReference>
<dbReference type="NCBIfam" id="NF001413">
    <property type="entry name" value="PRK00290.1"/>
    <property type="match status" value="1"/>
</dbReference>
<dbReference type="NCBIfam" id="TIGR02350">
    <property type="entry name" value="prok_dnaK"/>
    <property type="match status" value="1"/>
</dbReference>
<dbReference type="PANTHER" id="PTHR19375">
    <property type="entry name" value="HEAT SHOCK PROTEIN 70KDA"/>
    <property type="match status" value="1"/>
</dbReference>
<dbReference type="Pfam" id="PF00012">
    <property type="entry name" value="HSP70"/>
    <property type="match status" value="1"/>
</dbReference>
<dbReference type="PRINTS" id="PR00301">
    <property type="entry name" value="HEATSHOCK70"/>
</dbReference>
<dbReference type="SUPFAM" id="SSF53067">
    <property type="entry name" value="Actin-like ATPase domain"/>
    <property type="match status" value="2"/>
</dbReference>
<dbReference type="SUPFAM" id="SSF100934">
    <property type="entry name" value="Heat shock protein 70kD (HSP70), C-terminal subdomain"/>
    <property type="match status" value="1"/>
</dbReference>
<dbReference type="SUPFAM" id="SSF100920">
    <property type="entry name" value="Heat shock protein 70kD (HSP70), peptide-binding domain"/>
    <property type="match status" value="1"/>
</dbReference>
<dbReference type="PROSITE" id="PS00297">
    <property type="entry name" value="HSP70_1"/>
    <property type="match status" value="1"/>
</dbReference>
<dbReference type="PROSITE" id="PS00329">
    <property type="entry name" value="HSP70_2"/>
    <property type="match status" value="1"/>
</dbReference>
<dbReference type="PROSITE" id="PS01036">
    <property type="entry name" value="HSP70_3"/>
    <property type="match status" value="1"/>
</dbReference>
<organism>
    <name type="scientific">Priestia megaterium</name>
    <name type="common">Bacillus megaterium</name>
    <dbReference type="NCBI Taxonomy" id="1404"/>
    <lineage>
        <taxon>Bacteria</taxon>
        <taxon>Bacillati</taxon>
        <taxon>Bacillota</taxon>
        <taxon>Bacilli</taxon>
        <taxon>Bacillales</taxon>
        <taxon>Bacillaceae</taxon>
        <taxon>Priestia</taxon>
    </lineage>
</organism>
<gene>
    <name type="primary">dnaK</name>
</gene>